<name>GLNE_ACIAD</name>
<evidence type="ECO:0000255" key="1">
    <source>
        <dbReference type="HAMAP-Rule" id="MF_00802"/>
    </source>
</evidence>
<protein>
    <recommendedName>
        <fullName evidence="1">Bifunctional glutamine synthetase adenylyltransferase/adenylyl-removing enzyme</fullName>
    </recommendedName>
    <alternativeName>
        <fullName evidence="1">ATP:glutamine synthetase adenylyltransferase</fullName>
    </alternativeName>
    <alternativeName>
        <fullName evidence="1">ATase</fullName>
    </alternativeName>
    <domain>
        <recommendedName>
            <fullName evidence="1">Glutamine synthetase adenylyl-L-tyrosine phosphorylase</fullName>
            <ecNumber evidence="1">2.7.7.89</ecNumber>
        </recommendedName>
        <alternativeName>
            <fullName evidence="1">Adenylyl removase</fullName>
            <shortName evidence="1">AR</shortName>
            <shortName evidence="1">AT-N</shortName>
        </alternativeName>
    </domain>
    <domain>
        <recommendedName>
            <fullName evidence="1">Glutamine synthetase adenylyl transferase</fullName>
            <ecNumber evidence="1">2.7.7.42</ecNumber>
        </recommendedName>
        <alternativeName>
            <fullName evidence="1">Adenylyl transferase</fullName>
            <shortName evidence="1">AT</shortName>
            <shortName evidence="1">AT-C</shortName>
        </alternativeName>
    </domain>
</protein>
<organism>
    <name type="scientific">Acinetobacter baylyi (strain ATCC 33305 / BD413 / ADP1)</name>
    <dbReference type="NCBI Taxonomy" id="62977"/>
    <lineage>
        <taxon>Bacteria</taxon>
        <taxon>Pseudomonadati</taxon>
        <taxon>Pseudomonadota</taxon>
        <taxon>Gammaproteobacteria</taxon>
        <taxon>Moraxellales</taxon>
        <taxon>Moraxellaceae</taxon>
        <taxon>Acinetobacter</taxon>
    </lineage>
</organism>
<sequence>MQTKGCRFFMNTEQLQKTLRSSQYAEQVLGLHQLYLEQDYQIDQFAAPLSRENIFQSVENELKDIQDESQWMRVVRILRARLMFRWIWQDANRLTNVVSLTRELSDFADACICAAKQFARAPLVAKHGEPVGYDGQIQDLIVIGMGKLGAQELNLSSDIDLIFAYDEQGETNGRKSIDVQQFCILWGQKLIYLLDHITADGFVFRVDMRLRPWGDGSALAISHMALEKYLIQHGREWERYAWIKARIISGGKHGDDLLEMTRPFVFRRYVDYSAFAAMREMKSMIEREVARRNIADDIKLGAGGIREVEFIVQVFQLIYGGSKRELQDRQCLVSLNHLGQAGLLQSQDVIELEDAYLFLRRVEHAIQALNDQQTQMLPMEPELRQRILDTLEYPTWDNFIEALNEKRHKVSEQFKKLIQEEVTSPDETDTELEQQLNAILDETAQNLVHEFWQSNALKRLPSKAVQRLKDFWPHFIEAILQSEHPQMAFMRLMPLIESVMRRTVYLVMLMESRGAMQRLVKMATVSPWICEELTQYPVLLDEFLSMDFELPQRKDLEDSLRQQLLRIEIDQVEDQMRVLRLFKKSNVLTVAASDVLAESPLMKVSDALTDIAEVSVAATLNLAYQAVVKKHGYPKDASGERCSLEHTGFAVIGYGKLGGIELGYGSDLDLVFIHYFDEQAETDGSKSITGFEFAMRVAQKFLSLMTTQTLDGRVYEIDTRLRPSGEAGLLVTSLKAFEQYQLKSAWLWEHQALVRARSIAGEAQLRQKFESLRCQILTQSRDENEVRDEVLKMRQKMKDHLGSSNEQKKHGIFHLKQDAGGIVDIEFMAQYMVLAWSGANPDLAHFSDNVRILEDAAQAGCLSSEDATALMHAYLRERAESHRLALANQSMQVNAAQWRHTREVVCKLWQRLIDPASTMALESE</sequence>
<comment type="function">
    <text evidence="1">Involved in the regulation of glutamine synthetase GlnA, a key enzyme in the process to assimilate ammonia. When cellular nitrogen levels are high, the C-terminal adenylyl transferase (AT) inactivates GlnA by covalent transfer of an adenylyl group from ATP to specific tyrosine residue of GlnA, thus reducing its activity. Conversely, when nitrogen levels are low, the N-terminal adenylyl removase (AR) activates GlnA by removing the adenylyl group by phosphorolysis, increasing its activity. The regulatory region of GlnE binds the signal transduction protein PII (GlnB) which indicates the nitrogen status of the cell.</text>
</comment>
<comment type="catalytic activity">
    <reaction evidence="1">
        <text>[glutamine synthetase]-O(4)-(5'-adenylyl)-L-tyrosine + phosphate = [glutamine synthetase]-L-tyrosine + ADP</text>
        <dbReference type="Rhea" id="RHEA:43716"/>
        <dbReference type="Rhea" id="RHEA-COMP:10660"/>
        <dbReference type="Rhea" id="RHEA-COMP:10661"/>
        <dbReference type="ChEBI" id="CHEBI:43474"/>
        <dbReference type="ChEBI" id="CHEBI:46858"/>
        <dbReference type="ChEBI" id="CHEBI:83624"/>
        <dbReference type="ChEBI" id="CHEBI:456216"/>
        <dbReference type="EC" id="2.7.7.89"/>
    </reaction>
</comment>
<comment type="catalytic activity">
    <reaction evidence="1">
        <text>[glutamine synthetase]-L-tyrosine + ATP = [glutamine synthetase]-O(4)-(5'-adenylyl)-L-tyrosine + diphosphate</text>
        <dbReference type="Rhea" id="RHEA:18589"/>
        <dbReference type="Rhea" id="RHEA-COMP:10660"/>
        <dbReference type="Rhea" id="RHEA-COMP:10661"/>
        <dbReference type="ChEBI" id="CHEBI:30616"/>
        <dbReference type="ChEBI" id="CHEBI:33019"/>
        <dbReference type="ChEBI" id="CHEBI:46858"/>
        <dbReference type="ChEBI" id="CHEBI:83624"/>
        <dbReference type="EC" id="2.7.7.42"/>
    </reaction>
</comment>
<comment type="cofactor">
    <cofactor evidence="1">
        <name>Mg(2+)</name>
        <dbReference type="ChEBI" id="CHEBI:18420"/>
    </cofactor>
</comment>
<comment type="similarity">
    <text evidence="1">Belongs to the GlnE family.</text>
</comment>
<dbReference type="EC" id="2.7.7.89" evidence="1"/>
<dbReference type="EC" id="2.7.7.42" evidence="1"/>
<dbReference type="EMBL" id="CR543861">
    <property type="protein sequence ID" value="CAG67519.1"/>
    <property type="molecule type" value="Genomic_DNA"/>
</dbReference>
<dbReference type="SMR" id="Q6FEI9"/>
<dbReference type="STRING" id="202950.GCA_001485005_00831"/>
<dbReference type="KEGG" id="aci:ACIAD0596"/>
<dbReference type="eggNOG" id="COG1391">
    <property type="taxonomic scope" value="Bacteria"/>
</dbReference>
<dbReference type="HOGENOM" id="CLU_006233_0_1_6"/>
<dbReference type="Proteomes" id="UP000000430">
    <property type="component" value="Chromosome"/>
</dbReference>
<dbReference type="GO" id="GO:0005829">
    <property type="term" value="C:cytosol"/>
    <property type="evidence" value="ECO:0007669"/>
    <property type="project" value="TreeGrafter"/>
</dbReference>
<dbReference type="GO" id="GO:0008882">
    <property type="term" value="F:[glutamate-ammonia-ligase] adenylyltransferase activity"/>
    <property type="evidence" value="ECO:0007669"/>
    <property type="project" value="UniProtKB-UniRule"/>
</dbReference>
<dbReference type="GO" id="GO:0047388">
    <property type="term" value="F:[glutamine synthetase]-adenylyl-L-tyrosine phosphorylase activity"/>
    <property type="evidence" value="ECO:0007669"/>
    <property type="project" value="UniProtKB-EC"/>
</dbReference>
<dbReference type="GO" id="GO:0005524">
    <property type="term" value="F:ATP binding"/>
    <property type="evidence" value="ECO:0007669"/>
    <property type="project" value="UniProtKB-UniRule"/>
</dbReference>
<dbReference type="GO" id="GO:0000287">
    <property type="term" value="F:magnesium ion binding"/>
    <property type="evidence" value="ECO:0007669"/>
    <property type="project" value="UniProtKB-UniRule"/>
</dbReference>
<dbReference type="GO" id="GO:0000820">
    <property type="term" value="P:regulation of glutamine family amino acid metabolic process"/>
    <property type="evidence" value="ECO:0007669"/>
    <property type="project" value="UniProtKB-UniRule"/>
</dbReference>
<dbReference type="CDD" id="cd05401">
    <property type="entry name" value="NT_GlnE_GlnD_like"/>
    <property type="match status" value="2"/>
</dbReference>
<dbReference type="FunFam" id="1.20.120.330:FF:000005">
    <property type="entry name" value="Bifunctional glutamine synthetase adenylyltransferase/adenylyl-removing enzyme"/>
    <property type="match status" value="1"/>
</dbReference>
<dbReference type="FunFam" id="3.30.460.10:FF:000009">
    <property type="entry name" value="Bifunctional glutamine synthetase adenylyltransferase/adenylyl-removing enzyme"/>
    <property type="match status" value="1"/>
</dbReference>
<dbReference type="Gene3D" id="3.30.460.10">
    <property type="entry name" value="Beta Polymerase, domain 2"/>
    <property type="match status" value="2"/>
</dbReference>
<dbReference type="Gene3D" id="1.20.120.330">
    <property type="entry name" value="Nucleotidyltransferases domain 2"/>
    <property type="match status" value="2"/>
</dbReference>
<dbReference type="HAMAP" id="MF_00802">
    <property type="entry name" value="GlnE"/>
    <property type="match status" value="1"/>
</dbReference>
<dbReference type="InterPro" id="IPR023057">
    <property type="entry name" value="GlnE"/>
</dbReference>
<dbReference type="InterPro" id="IPR005190">
    <property type="entry name" value="GlnE_rpt_dom"/>
</dbReference>
<dbReference type="InterPro" id="IPR043519">
    <property type="entry name" value="NT_sf"/>
</dbReference>
<dbReference type="InterPro" id="IPR013546">
    <property type="entry name" value="PII_UdlTrfase/GS_AdlTrfase"/>
</dbReference>
<dbReference type="NCBIfam" id="NF008292">
    <property type="entry name" value="PRK11072.1"/>
    <property type="match status" value="1"/>
</dbReference>
<dbReference type="PANTHER" id="PTHR30621:SF0">
    <property type="entry name" value="BIFUNCTIONAL GLUTAMINE SYNTHETASE ADENYLYLTRANSFERASE_ADENYLYL-REMOVING ENZYME"/>
    <property type="match status" value="1"/>
</dbReference>
<dbReference type="PANTHER" id="PTHR30621">
    <property type="entry name" value="GLUTAMINE SYNTHETASE ADENYLYLTRANSFERASE"/>
    <property type="match status" value="1"/>
</dbReference>
<dbReference type="Pfam" id="PF08335">
    <property type="entry name" value="GlnD_UR_UTase"/>
    <property type="match status" value="2"/>
</dbReference>
<dbReference type="Pfam" id="PF03710">
    <property type="entry name" value="GlnE"/>
    <property type="match status" value="2"/>
</dbReference>
<dbReference type="SUPFAM" id="SSF81301">
    <property type="entry name" value="Nucleotidyltransferase"/>
    <property type="match status" value="2"/>
</dbReference>
<dbReference type="SUPFAM" id="SSF81593">
    <property type="entry name" value="Nucleotidyltransferase substrate binding subunit/domain"/>
    <property type="match status" value="2"/>
</dbReference>
<keyword id="KW-0067">ATP-binding</keyword>
<keyword id="KW-0460">Magnesium</keyword>
<keyword id="KW-0511">Multifunctional enzyme</keyword>
<keyword id="KW-0547">Nucleotide-binding</keyword>
<keyword id="KW-0548">Nucleotidyltransferase</keyword>
<keyword id="KW-0808">Transferase</keyword>
<feature type="chain" id="PRO_0000209225" description="Bifunctional glutamine synthetase adenylyltransferase/adenylyl-removing enzyme">
    <location>
        <begin position="1"/>
        <end position="924"/>
    </location>
</feature>
<feature type="region of interest" description="Adenylyl removase" evidence="1">
    <location>
        <begin position="1"/>
        <end position="422"/>
    </location>
</feature>
<feature type="region of interest" description="Adenylyl transferase" evidence="1">
    <location>
        <begin position="424"/>
        <end position="924"/>
    </location>
</feature>
<accession>Q6FEI9</accession>
<proteinExistence type="inferred from homology"/>
<gene>
    <name evidence="1" type="primary">glnE</name>
    <name type="ordered locus">ACIAD0596</name>
</gene>
<reference key="1">
    <citation type="journal article" date="2004" name="Nucleic Acids Res.">
        <title>Unique features revealed by the genome sequence of Acinetobacter sp. ADP1, a versatile and naturally transformation competent bacterium.</title>
        <authorList>
            <person name="Barbe V."/>
            <person name="Vallenet D."/>
            <person name="Fonknechten N."/>
            <person name="Kreimeyer A."/>
            <person name="Oztas S."/>
            <person name="Labarre L."/>
            <person name="Cruveiller S."/>
            <person name="Robert C."/>
            <person name="Duprat S."/>
            <person name="Wincker P."/>
            <person name="Ornston L.N."/>
            <person name="Weissenbach J."/>
            <person name="Marliere P."/>
            <person name="Cohen G.N."/>
            <person name="Medigue C."/>
        </authorList>
    </citation>
    <scope>NUCLEOTIDE SEQUENCE [LARGE SCALE GENOMIC DNA]</scope>
    <source>
        <strain>ATCC 33305 / BD413 / ADP1</strain>
    </source>
</reference>